<sequence>MSQDPYTPPPLPKPFTNTTPPPTLLTQGAEAHLYKTIHLNTNTPAALKIRPSKPYRHPILDRRLTRQRILQEARCLVKLVREGVNVPAVLALDWEGQGGENGNGGAWLLMEWIEGLVVRVVFERWEAFIKASGGSLGEKELRREEEKVRGLMRGIGGVVGGLHKAGVIHGDLTTSNLILRTGDVDIKDGESPAMVGDVVLIDFGLAGQSSSEEDRAVDLYVLERAFGSTHPQAEKFFEEVLEGYKDSYKGAAVTLKRLQDVRMRGRKRSMIG</sequence>
<gene>
    <name type="primary">bud32</name>
    <name type="ORF">AO090020000622</name>
</gene>
<name>BUD32_ASPOR</name>
<protein>
    <recommendedName>
        <fullName>EKC/KEOPS complex subunit bud32</fullName>
        <ecNumber evidence="2">3.6.-.-</ecNumber>
    </recommendedName>
    <alternativeName>
        <fullName>Atypical serine/threonine protein kinase bud32</fullName>
        <ecNumber evidence="1">2.7.11.1</ecNumber>
    </alternativeName>
</protein>
<comment type="function">
    <text evidence="1">Component of the EKC/KEOPS complex that is required for the formation of a threonylcarbamoyl group on adenosine at position 37 (t(6)A37) in tRNAs that read codons beginning with adenine. The complex is probably involved in the transfer of the threonylcarbamoyl moiety of threonylcarbamoyl-AMP (TC-AMP) to the N6 group of A37. BUD32 has ATPase activity in the context of the EKC/KEOPS complex and likely plays a supporting role to the catalytic subunit KAE1. The EKC/KEOPS complex also promotes both telomere uncapping and telomere elongation. The complex is required for efficient recruitment of transcriptional coactivators.</text>
</comment>
<comment type="catalytic activity">
    <reaction evidence="1">
        <text>L-seryl-[protein] + ATP = O-phospho-L-seryl-[protein] + ADP + H(+)</text>
        <dbReference type="Rhea" id="RHEA:17989"/>
        <dbReference type="Rhea" id="RHEA-COMP:9863"/>
        <dbReference type="Rhea" id="RHEA-COMP:11604"/>
        <dbReference type="ChEBI" id="CHEBI:15378"/>
        <dbReference type="ChEBI" id="CHEBI:29999"/>
        <dbReference type="ChEBI" id="CHEBI:30616"/>
        <dbReference type="ChEBI" id="CHEBI:83421"/>
        <dbReference type="ChEBI" id="CHEBI:456216"/>
        <dbReference type="EC" id="2.7.11.1"/>
    </reaction>
</comment>
<comment type="catalytic activity">
    <reaction evidence="1">
        <text>L-threonyl-[protein] + ATP = O-phospho-L-threonyl-[protein] + ADP + H(+)</text>
        <dbReference type="Rhea" id="RHEA:46608"/>
        <dbReference type="Rhea" id="RHEA-COMP:11060"/>
        <dbReference type="Rhea" id="RHEA-COMP:11605"/>
        <dbReference type="ChEBI" id="CHEBI:15378"/>
        <dbReference type="ChEBI" id="CHEBI:30013"/>
        <dbReference type="ChEBI" id="CHEBI:30616"/>
        <dbReference type="ChEBI" id="CHEBI:61977"/>
        <dbReference type="ChEBI" id="CHEBI:456216"/>
        <dbReference type="EC" id="2.7.11.1"/>
    </reaction>
</comment>
<comment type="subunit">
    <text evidence="1">Component of the EKC/KEOPS complex composed of at least bud32, cgi121, gon7, kae1 and pcc1; the whole complex dimerizes.</text>
</comment>
<comment type="subcellular location">
    <subcellularLocation>
        <location evidence="1">Cytoplasm</location>
    </subcellularLocation>
    <subcellularLocation>
        <location evidence="1">Nucleus</location>
    </subcellularLocation>
    <subcellularLocation>
        <location evidence="1">Chromosome</location>
        <location evidence="1">Telomere</location>
    </subcellularLocation>
</comment>
<comment type="domain">
    <text evidence="1 2">This protein is considered an atypical serine/threonine kinase, because it lacks the conventional structural elements necessary for the substrate recognition as well as a lysine residue that in all other serine/threonine kinases participates in the catalytic event (By similarity). BUD32 has protein kinase activity in vitro, but in the context of the EKC/KEOPS complex, the catalytic subunit KAE1 switches the activity of BUD32 from kinase into ATPase (By similarity).</text>
</comment>
<comment type="similarity">
    <text evidence="6">Belongs to the protein kinase superfamily. BUD32 family.</text>
</comment>
<keyword id="KW-0010">Activator</keyword>
<keyword id="KW-0067">ATP-binding</keyword>
<keyword id="KW-0158">Chromosome</keyword>
<keyword id="KW-0963">Cytoplasm</keyword>
<keyword id="KW-0378">Hydrolase</keyword>
<keyword id="KW-0418">Kinase</keyword>
<keyword id="KW-0547">Nucleotide-binding</keyword>
<keyword id="KW-0539">Nucleus</keyword>
<keyword id="KW-0597">Phosphoprotein</keyword>
<keyword id="KW-1185">Reference proteome</keyword>
<keyword id="KW-0723">Serine/threonine-protein kinase</keyword>
<keyword id="KW-0779">Telomere</keyword>
<keyword id="KW-0804">Transcription</keyword>
<keyword id="KW-0805">Transcription regulation</keyword>
<keyword id="KW-0808">Transferase</keyword>
<keyword id="KW-0819">tRNA processing</keyword>
<feature type="chain" id="PRO_0000278907" description="EKC/KEOPS complex subunit bud32">
    <location>
        <begin position="1"/>
        <end position="272"/>
    </location>
</feature>
<feature type="domain" description="Protein kinase" evidence="3">
    <location>
        <begin position="19"/>
        <end position="272"/>
    </location>
</feature>
<feature type="region of interest" description="Disordered" evidence="5">
    <location>
        <begin position="1"/>
        <end position="22"/>
    </location>
</feature>
<feature type="active site" description="Proton acceptor" evidence="3 4">
    <location>
        <position position="171"/>
    </location>
</feature>
<feature type="binding site" evidence="3">
    <location>
        <begin position="25"/>
        <end position="33"/>
    </location>
    <ligand>
        <name>ATP</name>
        <dbReference type="ChEBI" id="CHEBI:30616"/>
    </ligand>
</feature>
<feature type="binding site" evidence="3">
    <location>
        <position position="48"/>
    </location>
    <ligand>
        <name>ATP</name>
        <dbReference type="ChEBI" id="CHEBI:30616"/>
    </ligand>
</feature>
<organism>
    <name type="scientific">Aspergillus oryzae (strain ATCC 42149 / RIB 40)</name>
    <name type="common">Yellow koji mold</name>
    <dbReference type="NCBI Taxonomy" id="510516"/>
    <lineage>
        <taxon>Eukaryota</taxon>
        <taxon>Fungi</taxon>
        <taxon>Dikarya</taxon>
        <taxon>Ascomycota</taxon>
        <taxon>Pezizomycotina</taxon>
        <taxon>Eurotiomycetes</taxon>
        <taxon>Eurotiomycetidae</taxon>
        <taxon>Eurotiales</taxon>
        <taxon>Aspergillaceae</taxon>
        <taxon>Aspergillus</taxon>
        <taxon>Aspergillus subgen. Circumdati</taxon>
    </lineage>
</organism>
<accession>Q2U3T8</accession>
<reference key="1">
    <citation type="journal article" date="2005" name="Nature">
        <title>Genome sequencing and analysis of Aspergillus oryzae.</title>
        <authorList>
            <person name="Machida M."/>
            <person name="Asai K."/>
            <person name="Sano M."/>
            <person name="Tanaka T."/>
            <person name="Kumagai T."/>
            <person name="Terai G."/>
            <person name="Kusumoto K."/>
            <person name="Arima T."/>
            <person name="Akita O."/>
            <person name="Kashiwagi Y."/>
            <person name="Abe K."/>
            <person name="Gomi K."/>
            <person name="Horiuchi H."/>
            <person name="Kitamoto K."/>
            <person name="Kobayashi T."/>
            <person name="Takeuchi M."/>
            <person name="Denning D.W."/>
            <person name="Galagan J.E."/>
            <person name="Nierman W.C."/>
            <person name="Yu J."/>
            <person name="Archer D.B."/>
            <person name="Bennett J.W."/>
            <person name="Bhatnagar D."/>
            <person name="Cleveland T.E."/>
            <person name="Fedorova N.D."/>
            <person name="Gotoh O."/>
            <person name="Horikawa H."/>
            <person name="Hosoyama A."/>
            <person name="Ichinomiya M."/>
            <person name="Igarashi R."/>
            <person name="Iwashita K."/>
            <person name="Juvvadi P.R."/>
            <person name="Kato M."/>
            <person name="Kato Y."/>
            <person name="Kin T."/>
            <person name="Kokubun A."/>
            <person name="Maeda H."/>
            <person name="Maeyama N."/>
            <person name="Maruyama J."/>
            <person name="Nagasaki H."/>
            <person name="Nakajima T."/>
            <person name="Oda K."/>
            <person name="Okada K."/>
            <person name="Paulsen I."/>
            <person name="Sakamoto K."/>
            <person name="Sawano T."/>
            <person name="Takahashi M."/>
            <person name="Takase K."/>
            <person name="Terabayashi Y."/>
            <person name="Wortman J.R."/>
            <person name="Yamada O."/>
            <person name="Yamagata Y."/>
            <person name="Anazawa H."/>
            <person name="Hata Y."/>
            <person name="Koide Y."/>
            <person name="Komori T."/>
            <person name="Koyama Y."/>
            <person name="Minetoki T."/>
            <person name="Suharnan S."/>
            <person name="Tanaka A."/>
            <person name="Isono K."/>
            <person name="Kuhara S."/>
            <person name="Ogasawara N."/>
            <person name="Kikuchi H."/>
        </authorList>
    </citation>
    <scope>NUCLEOTIDE SEQUENCE [LARGE SCALE GENOMIC DNA]</scope>
    <source>
        <strain>ATCC 42149 / RIB 40</strain>
    </source>
</reference>
<proteinExistence type="inferred from homology"/>
<evidence type="ECO:0000250" key="1">
    <source>
        <dbReference type="UniProtKB" id="P53323"/>
    </source>
</evidence>
<evidence type="ECO:0000250" key="2">
    <source>
        <dbReference type="UniProtKB" id="Q9UYB9"/>
    </source>
</evidence>
<evidence type="ECO:0000255" key="3">
    <source>
        <dbReference type="PROSITE-ProRule" id="PRU00159"/>
    </source>
</evidence>
<evidence type="ECO:0000255" key="4">
    <source>
        <dbReference type="PROSITE-ProRule" id="PRU10028"/>
    </source>
</evidence>
<evidence type="ECO:0000256" key="5">
    <source>
        <dbReference type="SAM" id="MobiDB-lite"/>
    </source>
</evidence>
<evidence type="ECO:0000305" key="6"/>
<dbReference type="EC" id="3.6.-.-" evidence="2"/>
<dbReference type="EC" id="2.7.11.1" evidence="1"/>
<dbReference type="EMBL" id="BA000054">
    <property type="protein sequence ID" value="BAE63777.1"/>
    <property type="molecule type" value="Genomic_DNA"/>
</dbReference>
<dbReference type="RefSeq" id="XP_001824910.1">
    <property type="nucleotide sequence ID" value="XM_001824858.2"/>
</dbReference>
<dbReference type="SMR" id="Q2U3T8"/>
<dbReference type="STRING" id="510516.Q2U3T8"/>
<dbReference type="EnsemblFungi" id="BAE63777">
    <property type="protein sequence ID" value="BAE63777"/>
    <property type="gene ID" value="AO090020000622"/>
</dbReference>
<dbReference type="GeneID" id="5996996"/>
<dbReference type="KEGG" id="aor:AO090020000622"/>
<dbReference type="VEuPathDB" id="FungiDB:AO090020000622"/>
<dbReference type="HOGENOM" id="CLU_063953_1_0_1"/>
<dbReference type="OMA" id="HKLYMEY"/>
<dbReference type="OrthoDB" id="111787at5052"/>
<dbReference type="Proteomes" id="UP000006564">
    <property type="component" value="Chromosome 6"/>
</dbReference>
<dbReference type="GO" id="GO:0000781">
    <property type="term" value="C:chromosome, telomeric region"/>
    <property type="evidence" value="ECO:0007669"/>
    <property type="project" value="UniProtKB-SubCell"/>
</dbReference>
<dbReference type="GO" id="GO:0005829">
    <property type="term" value="C:cytosol"/>
    <property type="evidence" value="ECO:0007669"/>
    <property type="project" value="TreeGrafter"/>
</dbReference>
<dbReference type="GO" id="GO:0000408">
    <property type="term" value="C:EKC/KEOPS complex"/>
    <property type="evidence" value="ECO:0007669"/>
    <property type="project" value="TreeGrafter"/>
</dbReference>
<dbReference type="GO" id="GO:0005634">
    <property type="term" value="C:nucleus"/>
    <property type="evidence" value="ECO:0007669"/>
    <property type="project" value="UniProtKB-SubCell"/>
</dbReference>
<dbReference type="GO" id="GO:0005524">
    <property type="term" value="F:ATP binding"/>
    <property type="evidence" value="ECO:0007669"/>
    <property type="project" value="UniProtKB-KW"/>
</dbReference>
<dbReference type="GO" id="GO:0016787">
    <property type="term" value="F:hydrolase activity"/>
    <property type="evidence" value="ECO:0007669"/>
    <property type="project" value="UniProtKB-KW"/>
</dbReference>
<dbReference type="GO" id="GO:0106310">
    <property type="term" value="F:protein serine kinase activity"/>
    <property type="evidence" value="ECO:0007669"/>
    <property type="project" value="RHEA"/>
</dbReference>
<dbReference type="GO" id="GO:0004674">
    <property type="term" value="F:protein serine/threonine kinase activity"/>
    <property type="evidence" value="ECO:0007669"/>
    <property type="project" value="UniProtKB-KW"/>
</dbReference>
<dbReference type="GO" id="GO:0008033">
    <property type="term" value="P:tRNA processing"/>
    <property type="evidence" value="ECO:0007669"/>
    <property type="project" value="UniProtKB-KW"/>
</dbReference>
<dbReference type="GO" id="GO:0070525">
    <property type="term" value="P:tRNA threonylcarbamoyladenosine metabolic process"/>
    <property type="evidence" value="ECO:0007669"/>
    <property type="project" value="TreeGrafter"/>
</dbReference>
<dbReference type="FunFam" id="3.30.200.20:FF:000603">
    <property type="entry name" value="EKC/KEOPS complex subunit bud32"/>
    <property type="match status" value="1"/>
</dbReference>
<dbReference type="FunFam" id="1.10.510.10:FF:000845">
    <property type="entry name" value="Probable bifunctional tRNA threonylcarbamoyladenosine biosynthesis protein"/>
    <property type="match status" value="1"/>
</dbReference>
<dbReference type="Gene3D" id="3.30.200.20">
    <property type="entry name" value="Phosphorylase Kinase, domain 1"/>
    <property type="match status" value="1"/>
</dbReference>
<dbReference type="Gene3D" id="1.10.510.10">
    <property type="entry name" value="Transferase(Phosphotransferase) domain 1"/>
    <property type="match status" value="1"/>
</dbReference>
<dbReference type="InterPro" id="IPR022495">
    <property type="entry name" value="Bud32"/>
</dbReference>
<dbReference type="InterPro" id="IPR011009">
    <property type="entry name" value="Kinase-like_dom_sf"/>
</dbReference>
<dbReference type="InterPro" id="IPR000719">
    <property type="entry name" value="Prot_kinase_dom"/>
</dbReference>
<dbReference type="InterPro" id="IPR008266">
    <property type="entry name" value="Tyr_kinase_AS"/>
</dbReference>
<dbReference type="NCBIfam" id="TIGR03724">
    <property type="entry name" value="arch_bud32"/>
    <property type="match status" value="1"/>
</dbReference>
<dbReference type="PANTHER" id="PTHR12209:SF0">
    <property type="entry name" value="EKC_KEOPS COMPLEX SUBUNIT TP53RK"/>
    <property type="match status" value="1"/>
</dbReference>
<dbReference type="PANTHER" id="PTHR12209">
    <property type="entry name" value="NON-SPECIFIC SERINE/THREONINE PROTEIN KINASE"/>
    <property type="match status" value="1"/>
</dbReference>
<dbReference type="Pfam" id="PF06293">
    <property type="entry name" value="Kdo"/>
    <property type="match status" value="1"/>
</dbReference>
<dbReference type="SMART" id="SM00220">
    <property type="entry name" value="S_TKc"/>
    <property type="match status" value="1"/>
</dbReference>
<dbReference type="SUPFAM" id="SSF56112">
    <property type="entry name" value="Protein kinase-like (PK-like)"/>
    <property type="match status" value="1"/>
</dbReference>
<dbReference type="PROSITE" id="PS50011">
    <property type="entry name" value="PROTEIN_KINASE_DOM"/>
    <property type="match status" value="1"/>
</dbReference>
<dbReference type="PROSITE" id="PS00109">
    <property type="entry name" value="PROTEIN_KINASE_TYR"/>
    <property type="match status" value="1"/>
</dbReference>